<comment type="function">
    <text evidence="2">Functions in complex with FlhD as a master transcriptional regulator that regulates transcription of several flagellar and non-flagellar operons by binding to their promoter region. Activates expression of class 2 flagellar genes, including fliA, which is a flagellum-specific sigma factor that turns on the class 3 genes. Also regulates genes whose products function in a variety of physiological pathways (Probable).</text>
</comment>
<comment type="cofactor">
    <cofactor evidence="1">
        <name>Zn(2+)</name>
        <dbReference type="ChEBI" id="CHEBI:29105"/>
    </cofactor>
    <text evidence="1">Binds 1 zinc ion per subunit.</text>
</comment>
<comment type="subunit">
    <text evidence="1">Heterohexamer composed of two FlhC and four FlhD subunits. Each FlhC binds a FlhD dimer, forming a heterotrimer, and a hexamer assembles by dimerization of two heterotrimers.</text>
</comment>
<comment type="subcellular location">
    <subcellularLocation>
        <location evidence="1">Cytoplasm</location>
    </subcellularLocation>
</comment>
<comment type="similarity">
    <text evidence="1">Belongs to the FlhC family.</text>
</comment>
<gene>
    <name evidence="1" type="primary">flhC</name>
</gene>
<reference key="1">
    <citation type="journal article" date="1999" name="J. Bacteriol.">
        <title>The Yersinia enterocolitica motility master regulatory operon, flhDC, is required for flagellin production, swimming motility, and swarming motility.</title>
        <authorList>
            <person name="Young G.M."/>
            <person name="Smith M.J."/>
            <person name="Minnich S.A."/>
            <person name="Miller V.L."/>
        </authorList>
    </citation>
    <scope>NUCLEOTIDE SEQUENCE [GENOMIC DNA]</scope>
    <scope>FUNCTION</scope>
    <source>
        <strain>8081V / Serotype O:8</strain>
    </source>
</reference>
<feature type="chain" id="PRO_0000064346" description="Flagellar transcriptional regulator FlhC">
    <location>
        <begin position="1"/>
        <end position="193"/>
    </location>
</feature>
<feature type="binding site" evidence="1">
    <location>
        <position position="138"/>
    </location>
    <ligand>
        <name>Zn(2+)</name>
        <dbReference type="ChEBI" id="CHEBI:29105"/>
    </ligand>
</feature>
<feature type="binding site" evidence="1">
    <location>
        <position position="141"/>
    </location>
    <ligand>
        <name>Zn(2+)</name>
        <dbReference type="ChEBI" id="CHEBI:29105"/>
    </ligand>
</feature>
<feature type="binding site" evidence="1">
    <location>
        <position position="158"/>
    </location>
    <ligand>
        <name>Zn(2+)</name>
        <dbReference type="ChEBI" id="CHEBI:29105"/>
    </ligand>
</feature>
<feature type="binding site" evidence="1">
    <location>
        <position position="161"/>
    </location>
    <ligand>
        <name>Zn(2+)</name>
        <dbReference type="ChEBI" id="CHEBI:29105"/>
    </ligand>
</feature>
<accession>O86047</accession>
<keyword id="KW-0010">Activator</keyword>
<keyword id="KW-1005">Bacterial flagellum biogenesis</keyword>
<keyword id="KW-0963">Cytoplasm</keyword>
<keyword id="KW-0238">DNA-binding</keyword>
<keyword id="KW-0479">Metal-binding</keyword>
<keyword id="KW-0804">Transcription</keyword>
<keyword id="KW-0805">Transcription regulation</keyword>
<keyword id="KW-0862">Zinc</keyword>
<evidence type="ECO:0000255" key="1">
    <source>
        <dbReference type="HAMAP-Rule" id="MF_01891"/>
    </source>
</evidence>
<evidence type="ECO:0000305" key="2">
    <source>
    </source>
</evidence>
<sequence>MVEKSIVQEAKDIHLAMELITLGARLQMLESETQLSRGRLIKLYKELRGSPPPKGMLPFSTDWFMTWEQNIHSSMFYNAYSFLLKSGQCTGVEAVIKAYRLYLEQCPDQSGIPPLLALTRAWTLVRFVDSGMLQLSGCNCCGGTFITHAHQPRNSFVCSLCQPPSRAVKKRKLSPQSADITSQLLDEQVRRAV</sequence>
<dbReference type="EMBL" id="AF081587">
    <property type="protein sequence ID" value="AAC31211.1"/>
    <property type="molecule type" value="Genomic_DNA"/>
</dbReference>
<dbReference type="RefSeq" id="WP_005164496.1">
    <property type="nucleotide sequence ID" value="NZ_WJHZ01000004.1"/>
</dbReference>
<dbReference type="SMR" id="O86047"/>
<dbReference type="STRING" id="1443113.LC20_02133"/>
<dbReference type="GeneID" id="97456708"/>
<dbReference type="eggNOG" id="ENOG502Z927">
    <property type="taxonomic scope" value="Bacteria"/>
</dbReference>
<dbReference type="OMA" id="MLQLSAC"/>
<dbReference type="GO" id="GO:0005737">
    <property type="term" value="C:cytoplasm"/>
    <property type="evidence" value="ECO:0007669"/>
    <property type="project" value="UniProtKB-SubCell"/>
</dbReference>
<dbReference type="GO" id="GO:0003677">
    <property type="term" value="F:DNA binding"/>
    <property type="evidence" value="ECO:0007669"/>
    <property type="project" value="UniProtKB-UniRule"/>
</dbReference>
<dbReference type="GO" id="GO:0008270">
    <property type="term" value="F:zinc ion binding"/>
    <property type="evidence" value="ECO:0007669"/>
    <property type="project" value="UniProtKB-UniRule"/>
</dbReference>
<dbReference type="GO" id="GO:0044781">
    <property type="term" value="P:bacterial-type flagellum organization"/>
    <property type="evidence" value="ECO:0007669"/>
    <property type="project" value="UniProtKB-KW"/>
</dbReference>
<dbReference type="GO" id="GO:0045893">
    <property type="term" value="P:positive regulation of DNA-templated transcription"/>
    <property type="evidence" value="ECO:0007669"/>
    <property type="project" value="InterPro"/>
</dbReference>
<dbReference type="GO" id="GO:1902208">
    <property type="term" value="P:regulation of bacterial-type flagellum assembly"/>
    <property type="evidence" value="ECO:0007669"/>
    <property type="project" value="UniProtKB-UniRule"/>
</dbReference>
<dbReference type="HAMAP" id="MF_01891">
    <property type="entry name" value="FhlC"/>
    <property type="match status" value="1"/>
</dbReference>
<dbReference type="InterPro" id="IPR007944">
    <property type="entry name" value="FlhC"/>
</dbReference>
<dbReference type="NCBIfam" id="NF009365">
    <property type="entry name" value="PRK12722.1"/>
    <property type="match status" value="1"/>
</dbReference>
<dbReference type="Pfam" id="PF05280">
    <property type="entry name" value="FlhC"/>
    <property type="match status" value="1"/>
</dbReference>
<dbReference type="PIRSF" id="PIRSF003159">
    <property type="entry name" value="FlhC"/>
    <property type="match status" value="1"/>
</dbReference>
<dbReference type="SUPFAM" id="SSF160930">
    <property type="entry name" value="FlhC-like"/>
    <property type="match status" value="1"/>
</dbReference>
<organism>
    <name type="scientific">Yersinia enterocolitica</name>
    <dbReference type="NCBI Taxonomy" id="630"/>
    <lineage>
        <taxon>Bacteria</taxon>
        <taxon>Pseudomonadati</taxon>
        <taxon>Pseudomonadota</taxon>
        <taxon>Gammaproteobacteria</taxon>
        <taxon>Enterobacterales</taxon>
        <taxon>Yersiniaceae</taxon>
        <taxon>Yersinia</taxon>
    </lineage>
</organism>
<name>FLHC_YEREN</name>
<protein>
    <recommendedName>
        <fullName evidence="1">Flagellar transcriptional regulator FlhC</fullName>
    </recommendedName>
</protein>
<proteinExistence type="inferred from homology"/>